<accession>Q6NGC0</accession>
<reference key="1">
    <citation type="journal article" date="2003" name="Nucleic Acids Res.">
        <title>The complete genome sequence and analysis of Corynebacterium diphtheriae NCTC13129.</title>
        <authorList>
            <person name="Cerdeno-Tarraga A.-M."/>
            <person name="Efstratiou A."/>
            <person name="Dover L.G."/>
            <person name="Holden M.T.G."/>
            <person name="Pallen M.J."/>
            <person name="Bentley S.D."/>
            <person name="Besra G.S."/>
            <person name="Churcher C.M."/>
            <person name="James K.D."/>
            <person name="De Zoysa A."/>
            <person name="Chillingworth T."/>
            <person name="Cronin A."/>
            <person name="Dowd L."/>
            <person name="Feltwell T."/>
            <person name="Hamlin N."/>
            <person name="Holroyd S."/>
            <person name="Jagels K."/>
            <person name="Moule S."/>
            <person name="Quail M.A."/>
            <person name="Rabbinowitsch E."/>
            <person name="Rutherford K.M."/>
            <person name="Thomson N.R."/>
            <person name="Unwin L."/>
            <person name="Whitehead S."/>
            <person name="Barrell B.G."/>
            <person name="Parkhill J."/>
        </authorList>
    </citation>
    <scope>NUCLEOTIDE SEQUENCE [LARGE SCALE GENOMIC DNA]</scope>
    <source>
        <strain>ATCC 700971 / NCTC 13129 / Biotype gravis</strain>
    </source>
</reference>
<protein>
    <recommendedName>
        <fullName>Transcriptional regulator MraZ</fullName>
    </recommendedName>
</protein>
<evidence type="ECO:0000255" key="1">
    <source>
        <dbReference type="HAMAP-Rule" id="MF_01008"/>
    </source>
</evidence>
<evidence type="ECO:0000255" key="2">
    <source>
        <dbReference type="PROSITE-ProRule" id="PRU01076"/>
    </source>
</evidence>
<dbReference type="EMBL" id="BX248358">
    <property type="protein sequence ID" value="CAE50132.1"/>
    <property type="molecule type" value="Genomic_DNA"/>
</dbReference>
<dbReference type="RefSeq" id="WP_003852170.1">
    <property type="nucleotide sequence ID" value="NC_002935.2"/>
</dbReference>
<dbReference type="SMR" id="Q6NGC0"/>
<dbReference type="STRING" id="257309.DIP1607"/>
<dbReference type="GeneID" id="29421467"/>
<dbReference type="KEGG" id="cdi:DIP1607"/>
<dbReference type="HOGENOM" id="CLU_107907_0_5_11"/>
<dbReference type="Proteomes" id="UP000002198">
    <property type="component" value="Chromosome"/>
</dbReference>
<dbReference type="GO" id="GO:0005737">
    <property type="term" value="C:cytoplasm"/>
    <property type="evidence" value="ECO:0007669"/>
    <property type="project" value="UniProtKB-UniRule"/>
</dbReference>
<dbReference type="GO" id="GO:0009295">
    <property type="term" value="C:nucleoid"/>
    <property type="evidence" value="ECO:0007669"/>
    <property type="project" value="UniProtKB-SubCell"/>
</dbReference>
<dbReference type="GO" id="GO:0003700">
    <property type="term" value="F:DNA-binding transcription factor activity"/>
    <property type="evidence" value="ECO:0007669"/>
    <property type="project" value="UniProtKB-UniRule"/>
</dbReference>
<dbReference type="GO" id="GO:0000976">
    <property type="term" value="F:transcription cis-regulatory region binding"/>
    <property type="evidence" value="ECO:0007669"/>
    <property type="project" value="TreeGrafter"/>
</dbReference>
<dbReference type="GO" id="GO:2000143">
    <property type="term" value="P:negative regulation of DNA-templated transcription initiation"/>
    <property type="evidence" value="ECO:0007669"/>
    <property type="project" value="TreeGrafter"/>
</dbReference>
<dbReference type="CDD" id="cd16321">
    <property type="entry name" value="MraZ_C"/>
    <property type="match status" value="1"/>
</dbReference>
<dbReference type="CDD" id="cd16320">
    <property type="entry name" value="MraZ_N"/>
    <property type="match status" value="1"/>
</dbReference>
<dbReference type="Gene3D" id="3.40.1550.20">
    <property type="entry name" value="Transcriptional regulator MraZ domain"/>
    <property type="match status" value="1"/>
</dbReference>
<dbReference type="HAMAP" id="MF_01008">
    <property type="entry name" value="MraZ"/>
    <property type="match status" value="1"/>
</dbReference>
<dbReference type="InterPro" id="IPR003444">
    <property type="entry name" value="MraZ"/>
</dbReference>
<dbReference type="InterPro" id="IPR035644">
    <property type="entry name" value="MraZ_C"/>
</dbReference>
<dbReference type="InterPro" id="IPR020603">
    <property type="entry name" value="MraZ_dom"/>
</dbReference>
<dbReference type="InterPro" id="IPR035642">
    <property type="entry name" value="MraZ_N"/>
</dbReference>
<dbReference type="InterPro" id="IPR038619">
    <property type="entry name" value="MraZ_sf"/>
</dbReference>
<dbReference type="InterPro" id="IPR007159">
    <property type="entry name" value="SpoVT-AbrB_dom"/>
</dbReference>
<dbReference type="InterPro" id="IPR037914">
    <property type="entry name" value="SpoVT-AbrB_sf"/>
</dbReference>
<dbReference type="NCBIfam" id="TIGR00242">
    <property type="entry name" value="division/cell wall cluster transcriptional repressor MraZ"/>
    <property type="match status" value="1"/>
</dbReference>
<dbReference type="PANTHER" id="PTHR34701">
    <property type="entry name" value="TRANSCRIPTIONAL REGULATOR MRAZ"/>
    <property type="match status" value="1"/>
</dbReference>
<dbReference type="PANTHER" id="PTHR34701:SF1">
    <property type="entry name" value="TRANSCRIPTIONAL REGULATOR MRAZ"/>
    <property type="match status" value="1"/>
</dbReference>
<dbReference type="Pfam" id="PF02381">
    <property type="entry name" value="MraZ"/>
    <property type="match status" value="2"/>
</dbReference>
<dbReference type="SUPFAM" id="SSF89447">
    <property type="entry name" value="AbrB/MazE/MraZ-like"/>
    <property type="match status" value="1"/>
</dbReference>
<dbReference type="PROSITE" id="PS51740">
    <property type="entry name" value="SPOVT_ABRB"/>
    <property type="match status" value="2"/>
</dbReference>
<keyword id="KW-0963">Cytoplasm</keyword>
<keyword id="KW-0238">DNA-binding</keyword>
<keyword id="KW-1185">Reference proteome</keyword>
<keyword id="KW-0677">Repeat</keyword>
<keyword id="KW-0804">Transcription</keyword>
<keyword id="KW-0805">Transcription regulation</keyword>
<feature type="chain" id="PRO_0000108472" description="Transcriptional regulator MraZ">
    <location>
        <begin position="1"/>
        <end position="143"/>
    </location>
</feature>
<feature type="domain" description="SpoVT-AbrB 1" evidence="2">
    <location>
        <begin position="5"/>
        <end position="47"/>
    </location>
</feature>
<feature type="domain" description="SpoVT-AbrB 2" evidence="2">
    <location>
        <begin position="76"/>
        <end position="119"/>
    </location>
</feature>
<proteinExistence type="inferred from homology"/>
<gene>
    <name evidence="1" type="primary">mraZ</name>
    <name type="ordered locus">DIP1607</name>
</gene>
<name>MRAZ_CORDI</name>
<organism>
    <name type="scientific">Corynebacterium diphtheriae (strain ATCC 700971 / NCTC 13129 / Biotype gravis)</name>
    <dbReference type="NCBI Taxonomy" id="257309"/>
    <lineage>
        <taxon>Bacteria</taxon>
        <taxon>Bacillati</taxon>
        <taxon>Actinomycetota</taxon>
        <taxon>Actinomycetes</taxon>
        <taxon>Mycobacteriales</taxon>
        <taxon>Corynebacteriaceae</taxon>
        <taxon>Corynebacterium</taxon>
    </lineage>
</organism>
<comment type="subunit">
    <text evidence="1">Forms oligomers.</text>
</comment>
<comment type="subcellular location">
    <subcellularLocation>
        <location evidence="1">Cytoplasm</location>
        <location evidence="1">Nucleoid</location>
    </subcellularLocation>
</comment>
<comment type="similarity">
    <text evidence="1">Belongs to the MraZ family.</text>
</comment>
<sequence>MFLGTYTPKLDDKGRLTLPAKFREELAGGLMVTKGQDHSLAVYPREEFAARARKAAAVSRTNPEARAFIRNLAASADEQRPDGQGRITLSAAHRTYAGLSKECVVIGSVDFLEIWDAAAWAAYQEETEAAFSSAEGEFLGDFL</sequence>